<dbReference type="EMBL" id="BA000019">
    <property type="protein sequence ID" value="BAB72604.1"/>
    <property type="molecule type" value="Genomic_DNA"/>
</dbReference>
<dbReference type="PIR" id="AE1887">
    <property type="entry name" value="AE1887"/>
</dbReference>
<dbReference type="SMR" id="Q8YZ41"/>
<dbReference type="STRING" id="103690.gene:10492657"/>
<dbReference type="KEGG" id="ana:all0646"/>
<dbReference type="eggNOG" id="ENOG502Z86M">
    <property type="taxonomic scope" value="Bacteria"/>
</dbReference>
<dbReference type="OrthoDB" id="463078at2"/>
<dbReference type="Proteomes" id="UP000002483">
    <property type="component" value="Chromosome"/>
</dbReference>
<dbReference type="GO" id="GO:0030096">
    <property type="term" value="C:plasma membrane-derived thylakoid photosystem II"/>
    <property type="evidence" value="ECO:0007669"/>
    <property type="project" value="TreeGrafter"/>
</dbReference>
<dbReference type="GO" id="GO:0010207">
    <property type="term" value="P:photosystem II assembly"/>
    <property type="evidence" value="ECO:0007669"/>
    <property type="project" value="InterPro"/>
</dbReference>
<dbReference type="HAMAP" id="MF_01843">
    <property type="entry name" value="Thf1"/>
    <property type="match status" value="1"/>
</dbReference>
<dbReference type="InterPro" id="IPR017499">
    <property type="entry name" value="Thf1"/>
</dbReference>
<dbReference type="NCBIfam" id="TIGR03060">
    <property type="entry name" value="PS_II_psb29"/>
    <property type="match status" value="1"/>
</dbReference>
<dbReference type="PANTHER" id="PTHR34793">
    <property type="entry name" value="PROTEIN THYLAKOID FORMATION 1, CHLOROPLASTIC"/>
    <property type="match status" value="1"/>
</dbReference>
<dbReference type="PANTHER" id="PTHR34793:SF1">
    <property type="entry name" value="PROTEIN THYLAKOID FORMATION 1, CHLOROPLASTIC"/>
    <property type="match status" value="1"/>
</dbReference>
<dbReference type="Pfam" id="PF11264">
    <property type="entry name" value="ThylakoidFormat"/>
    <property type="match status" value="1"/>
</dbReference>
<gene>
    <name evidence="1" type="primary">thf1</name>
    <name type="ordered locus">all0646</name>
</gene>
<name>THF1_NOSS1</name>
<keyword id="KW-0175">Coiled coil</keyword>
<keyword id="KW-1185">Reference proteome</keyword>
<reference key="1">
    <citation type="journal article" date="2001" name="DNA Res.">
        <title>Complete genomic sequence of the filamentous nitrogen-fixing cyanobacterium Anabaena sp. strain PCC 7120.</title>
        <authorList>
            <person name="Kaneko T."/>
            <person name="Nakamura Y."/>
            <person name="Wolk C.P."/>
            <person name="Kuritz T."/>
            <person name="Sasamoto S."/>
            <person name="Watanabe A."/>
            <person name="Iriguchi M."/>
            <person name="Ishikawa A."/>
            <person name="Kawashima K."/>
            <person name="Kimura T."/>
            <person name="Kishida Y."/>
            <person name="Kohara M."/>
            <person name="Matsumoto M."/>
            <person name="Matsuno A."/>
            <person name="Muraki A."/>
            <person name="Nakazaki N."/>
            <person name="Shimpo S."/>
            <person name="Sugimoto M."/>
            <person name="Takazawa M."/>
            <person name="Yamada M."/>
            <person name="Yasuda M."/>
            <person name="Tabata S."/>
        </authorList>
    </citation>
    <scope>NUCLEOTIDE SEQUENCE [LARGE SCALE GENOMIC DNA]</scope>
    <source>
        <strain>PCC 7120 / SAG 25.82 / UTEX 2576</strain>
    </source>
</reference>
<evidence type="ECO:0000255" key="1">
    <source>
        <dbReference type="HAMAP-Rule" id="MF_01843"/>
    </source>
</evidence>
<evidence type="ECO:0000256" key="2">
    <source>
        <dbReference type="SAM" id="MobiDB-lite"/>
    </source>
</evidence>
<protein>
    <recommendedName>
        <fullName evidence="1">Protein Thf1</fullName>
    </recommendedName>
</protein>
<proteinExistence type="inferred from homology"/>
<sequence length="233" mass="26742">MELLRTVSDTKRTFYALHTRPINTIYRRVVEELMVEMHLLSVNVDFSYNPIYALGVVTTFDRFMEGYQPERDKESIFSAICQAVEQEPQRYRQDAERLQAVAQSLPVNDLVAWLSQANHLQQDADLQAQLQAIANNSNFKYSRLFAIGLFTLLEQSNPDLVKDEKQRTEALKSIAAGLHLSDDKFSKDLELYRSNLDKMTQALAVMADMLTADRKKREQRQQQASTPVAPPNE</sequence>
<accession>Q8YZ41</accession>
<comment type="function">
    <text evidence="1">May be involved in photosynthetic membrane biogenesis.</text>
</comment>
<comment type="similarity">
    <text evidence="1">Belongs to the THF1 family.</text>
</comment>
<feature type="chain" id="PRO_0000235210" description="Protein Thf1">
    <location>
        <begin position="1"/>
        <end position="233"/>
    </location>
</feature>
<feature type="region of interest" description="Disordered" evidence="2">
    <location>
        <begin position="212"/>
        <end position="233"/>
    </location>
</feature>
<feature type="coiled-coil region" evidence="1">
    <location>
        <begin position="183"/>
        <end position="204"/>
    </location>
</feature>
<organism>
    <name type="scientific">Nostoc sp. (strain PCC 7120 / SAG 25.82 / UTEX 2576)</name>
    <dbReference type="NCBI Taxonomy" id="103690"/>
    <lineage>
        <taxon>Bacteria</taxon>
        <taxon>Bacillati</taxon>
        <taxon>Cyanobacteriota</taxon>
        <taxon>Cyanophyceae</taxon>
        <taxon>Nostocales</taxon>
        <taxon>Nostocaceae</taxon>
        <taxon>Nostoc</taxon>
    </lineage>
</organism>